<proteinExistence type="inferred from homology"/>
<evidence type="ECO:0000255" key="1">
    <source>
        <dbReference type="HAMAP-Rule" id="MF_00305"/>
    </source>
</evidence>
<evidence type="ECO:0000305" key="2"/>
<sequence length="92" mass="10179">MVENVIWPAALDANRSRSDGRRVSLDLAVENPTVDEIAKAVQQVGYDAVIERDKTYPREYEGRGRVVVKDADDATKSDLLGAVAAYMQALRE</sequence>
<comment type="function">
    <text evidence="1">Involved in targeting and insertion of nascent membrane proteins into the cytoplasmic membrane. Binds directly to 7S RNA and mediates binding of the 54 kDa subunit of the SRP.</text>
</comment>
<comment type="subunit">
    <text evidence="1">Part of the signal recognition particle protein translocation system, which is composed of SRP and FtsY. Archaeal SRP consists of a 7S RNA molecule of 300 nucleotides and two protein subunits: SRP54 and SRP19.</text>
</comment>
<comment type="subcellular location">
    <subcellularLocation>
        <location evidence="1">Cytoplasm</location>
    </subcellularLocation>
</comment>
<comment type="similarity">
    <text evidence="1">Belongs to the SRP19 family.</text>
</comment>
<comment type="sequence caution" evidence="2">
    <conflict type="erroneous initiation">
        <sequence resource="EMBL-CDS" id="AAV45123"/>
    </conflict>
    <text>Extended N-terminus.</text>
</comment>
<name>SRP19_HALMA</name>
<dbReference type="EMBL" id="AY596297">
    <property type="protein sequence ID" value="AAV45123.1"/>
    <property type="status" value="ALT_INIT"/>
    <property type="molecule type" value="Genomic_DNA"/>
</dbReference>
<dbReference type="RefSeq" id="WP_004963393.1">
    <property type="nucleotide sequence ID" value="NZ_CP039138.1"/>
</dbReference>
<dbReference type="SMR" id="Q5V5S9"/>
<dbReference type="STRING" id="272569.rrnAC0041"/>
<dbReference type="TCDB" id="3.A.5.7.1">
    <property type="family name" value="the general secretory pathway (sec) family"/>
</dbReference>
<dbReference type="PaxDb" id="272569-rrnAC0041"/>
<dbReference type="EnsemblBacteria" id="AAV45123">
    <property type="protein sequence ID" value="AAV45123"/>
    <property type="gene ID" value="rrnAC0041"/>
</dbReference>
<dbReference type="GeneID" id="64823191"/>
<dbReference type="KEGG" id="hma:rrnAC0041"/>
<dbReference type="PATRIC" id="fig|272569.17.peg.852"/>
<dbReference type="eggNOG" id="arCOG01217">
    <property type="taxonomic scope" value="Archaea"/>
</dbReference>
<dbReference type="HOGENOM" id="CLU_169299_1_0_2"/>
<dbReference type="Proteomes" id="UP000001169">
    <property type="component" value="Chromosome I"/>
</dbReference>
<dbReference type="GO" id="GO:0048500">
    <property type="term" value="C:signal recognition particle"/>
    <property type="evidence" value="ECO:0007669"/>
    <property type="project" value="UniProtKB-UniRule"/>
</dbReference>
<dbReference type="GO" id="GO:0008312">
    <property type="term" value="F:7S RNA binding"/>
    <property type="evidence" value="ECO:0007669"/>
    <property type="project" value="UniProtKB-UniRule"/>
</dbReference>
<dbReference type="GO" id="GO:0006617">
    <property type="term" value="P:SRP-dependent cotranslational protein targeting to membrane, signal sequence recognition"/>
    <property type="evidence" value="ECO:0007669"/>
    <property type="project" value="TreeGrafter"/>
</dbReference>
<dbReference type="Gene3D" id="3.30.56.30">
    <property type="entry name" value="Signal recognition particle, SRP19-like subunit"/>
    <property type="match status" value="1"/>
</dbReference>
<dbReference type="HAMAP" id="MF_00305">
    <property type="entry name" value="SRP19"/>
    <property type="match status" value="1"/>
</dbReference>
<dbReference type="InterPro" id="IPR002778">
    <property type="entry name" value="Signal_recog_particle_SRP19"/>
</dbReference>
<dbReference type="InterPro" id="IPR053394">
    <property type="entry name" value="SRP19"/>
</dbReference>
<dbReference type="InterPro" id="IPR036521">
    <property type="entry name" value="SRP19-like_sf"/>
</dbReference>
<dbReference type="InterPro" id="IPR022938">
    <property type="entry name" value="SRP19_arc-type"/>
</dbReference>
<dbReference type="NCBIfam" id="NF041311">
    <property type="entry name" value="Sig_rec_Srp19_Halo"/>
    <property type="match status" value="1"/>
</dbReference>
<dbReference type="PANTHER" id="PTHR17453">
    <property type="entry name" value="SIGNAL RECOGNITION PARTICLE 19 KD PROTEIN"/>
    <property type="match status" value="1"/>
</dbReference>
<dbReference type="PANTHER" id="PTHR17453:SF0">
    <property type="entry name" value="SIGNAL RECOGNITION PARTICLE 19 KDA PROTEIN"/>
    <property type="match status" value="1"/>
</dbReference>
<dbReference type="Pfam" id="PF01922">
    <property type="entry name" value="SRP19"/>
    <property type="match status" value="1"/>
</dbReference>
<dbReference type="SUPFAM" id="SSF69695">
    <property type="entry name" value="SRP19"/>
    <property type="match status" value="1"/>
</dbReference>
<organism>
    <name type="scientific">Haloarcula marismortui (strain ATCC 43049 / DSM 3752 / JCM 8966 / VKM B-1809)</name>
    <name type="common">Halobacterium marismortui</name>
    <dbReference type="NCBI Taxonomy" id="272569"/>
    <lineage>
        <taxon>Archaea</taxon>
        <taxon>Methanobacteriati</taxon>
        <taxon>Methanobacteriota</taxon>
        <taxon>Stenosarchaea group</taxon>
        <taxon>Halobacteria</taxon>
        <taxon>Halobacteriales</taxon>
        <taxon>Haloarculaceae</taxon>
        <taxon>Haloarcula</taxon>
    </lineage>
</organism>
<feature type="chain" id="PRO_0000300742" description="Signal recognition particle 19 kDa protein">
    <location>
        <begin position="1"/>
        <end position="92"/>
    </location>
</feature>
<keyword id="KW-0963">Cytoplasm</keyword>
<keyword id="KW-1185">Reference proteome</keyword>
<keyword id="KW-0687">Ribonucleoprotein</keyword>
<keyword id="KW-0694">RNA-binding</keyword>
<keyword id="KW-0733">Signal recognition particle</keyword>
<accession>Q5V5S9</accession>
<reference key="1">
    <citation type="journal article" date="2004" name="Genome Res.">
        <title>Genome sequence of Haloarcula marismortui: a halophilic archaeon from the Dead Sea.</title>
        <authorList>
            <person name="Baliga N.S."/>
            <person name="Bonneau R."/>
            <person name="Facciotti M.T."/>
            <person name="Pan M."/>
            <person name="Glusman G."/>
            <person name="Deutsch E.W."/>
            <person name="Shannon P."/>
            <person name="Chiu Y."/>
            <person name="Weng R.S."/>
            <person name="Gan R.R."/>
            <person name="Hung P."/>
            <person name="Date S.V."/>
            <person name="Marcotte E."/>
            <person name="Hood L."/>
            <person name="Ng W.V."/>
        </authorList>
    </citation>
    <scope>NUCLEOTIDE SEQUENCE [LARGE SCALE GENOMIC DNA]</scope>
    <source>
        <strain>ATCC 43049 / DSM 3752 / JCM 8966 / VKM B-1809</strain>
    </source>
</reference>
<protein>
    <recommendedName>
        <fullName evidence="1">Signal recognition particle 19 kDa protein</fullName>
        <shortName evidence="1">SRP19</shortName>
    </recommendedName>
</protein>
<gene>
    <name evidence="1" type="primary">srp19</name>
    <name type="ordered locus">rrnAC0041</name>
</gene>